<feature type="chain" id="PRO_0000229264" description="Ribosome maturation factor RimP">
    <location>
        <begin position="1"/>
        <end position="151"/>
    </location>
</feature>
<proteinExistence type="inferred from homology"/>
<name>RIMP_PSET1</name>
<protein>
    <recommendedName>
        <fullName evidence="1">Ribosome maturation factor RimP</fullName>
    </recommendedName>
</protein>
<organism>
    <name type="scientific">Pseudoalteromonas translucida (strain TAC 125)</name>
    <dbReference type="NCBI Taxonomy" id="326442"/>
    <lineage>
        <taxon>Bacteria</taxon>
        <taxon>Pseudomonadati</taxon>
        <taxon>Pseudomonadota</taxon>
        <taxon>Gammaproteobacteria</taxon>
        <taxon>Alteromonadales</taxon>
        <taxon>Pseudoalteromonadaceae</taxon>
        <taxon>Pseudoalteromonas</taxon>
    </lineage>
</organism>
<sequence length="151" mass="16858">MTKLEQDLVAMLTPAVEMLGFELHGLEFVQAGRHSTLRVYITHEAGISVDNCADASRQISAILDVEDPITNEYDLEVSSPGVDRLLFKQDHYEQAQGEEVQLRTKLPQDGRRNFKGDLIAVTSDMITLSSDGTEHLIMLSNIERANIIAKF</sequence>
<comment type="function">
    <text evidence="1">Required for maturation of 30S ribosomal subunits.</text>
</comment>
<comment type="subcellular location">
    <subcellularLocation>
        <location evidence="1">Cytoplasm</location>
    </subcellularLocation>
</comment>
<comment type="similarity">
    <text evidence="1">Belongs to the RimP family.</text>
</comment>
<comment type="sequence caution" evidence="2">
    <conflict type="erroneous initiation">
        <sequence resource="EMBL-CDS" id="CAI86073"/>
    </conflict>
</comment>
<evidence type="ECO:0000255" key="1">
    <source>
        <dbReference type="HAMAP-Rule" id="MF_01077"/>
    </source>
</evidence>
<evidence type="ECO:0000305" key="2"/>
<gene>
    <name evidence="1" type="primary">rimP</name>
    <name type="ordered locus">PSHAa0995</name>
</gene>
<keyword id="KW-0963">Cytoplasm</keyword>
<keyword id="KW-1185">Reference proteome</keyword>
<keyword id="KW-0690">Ribosome biogenesis</keyword>
<reference key="1">
    <citation type="journal article" date="2005" name="Genome Res.">
        <title>Coping with cold: the genome of the versatile marine Antarctica bacterium Pseudoalteromonas haloplanktis TAC125.</title>
        <authorList>
            <person name="Medigue C."/>
            <person name="Krin E."/>
            <person name="Pascal G."/>
            <person name="Barbe V."/>
            <person name="Bernsel A."/>
            <person name="Bertin P.N."/>
            <person name="Cheung F."/>
            <person name="Cruveiller S."/>
            <person name="D'Amico S."/>
            <person name="Duilio A."/>
            <person name="Fang G."/>
            <person name="Feller G."/>
            <person name="Ho C."/>
            <person name="Mangenot S."/>
            <person name="Marino G."/>
            <person name="Nilsson J."/>
            <person name="Parrilli E."/>
            <person name="Rocha E.P.C."/>
            <person name="Rouy Z."/>
            <person name="Sekowska A."/>
            <person name="Tutino M.L."/>
            <person name="Vallenet D."/>
            <person name="von Heijne G."/>
            <person name="Danchin A."/>
        </authorList>
    </citation>
    <scope>NUCLEOTIDE SEQUENCE [LARGE SCALE GENOMIC DNA]</scope>
    <source>
        <strain>TAC 125</strain>
    </source>
</reference>
<dbReference type="EMBL" id="CR954246">
    <property type="protein sequence ID" value="CAI86073.1"/>
    <property type="status" value="ALT_INIT"/>
    <property type="molecule type" value="Genomic_DNA"/>
</dbReference>
<dbReference type="SMR" id="Q3IJ55"/>
<dbReference type="STRING" id="326442.PSHAa0995"/>
<dbReference type="KEGG" id="pha:PSHAa0995"/>
<dbReference type="eggNOG" id="COG0779">
    <property type="taxonomic scope" value="Bacteria"/>
</dbReference>
<dbReference type="HOGENOM" id="CLU_070525_1_1_6"/>
<dbReference type="BioCyc" id="PHAL326442:PSHA_RS04860-MONOMER"/>
<dbReference type="Proteomes" id="UP000006843">
    <property type="component" value="Chromosome I"/>
</dbReference>
<dbReference type="GO" id="GO:0005829">
    <property type="term" value="C:cytosol"/>
    <property type="evidence" value="ECO:0007669"/>
    <property type="project" value="TreeGrafter"/>
</dbReference>
<dbReference type="GO" id="GO:0000028">
    <property type="term" value="P:ribosomal small subunit assembly"/>
    <property type="evidence" value="ECO:0007669"/>
    <property type="project" value="TreeGrafter"/>
</dbReference>
<dbReference type="GO" id="GO:0006412">
    <property type="term" value="P:translation"/>
    <property type="evidence" value="ECO:0007669"/>
    <property type="project" value="TreeGrafter"/>
</dbReference>
<dbReference type="CDD" id="cd01734">
    <property type="entry name" value="YlxS_C"/>
    <property type="match status" value="1"/>
</dbReference>
<dbReference type="FunFam" id="3.30.300.70:FF:000001">
    <property type="entry name" value="Ribosome maturation factor RimP"/>
    <property type="match status" value="1"/>
</dbReference>
<dbReference type="Gene3D" id="2.30.30.180">
    <property type="entry name" value="Ribosome maturation factor RimP, C-terminal domain"/>
    <property type="match status" value="1"/>
</dbReference>
<dbReference type="Gene3D" id="3.30.300.70">
    <property type="entry name" value="RimP-like superfamily, N-terminal"/>
    <property type="match status" value="1"/>
</dbReference>
<dbReference type="HAMAP" id="MF_01077">
    <property type="entry name" value="RimP"/>
    <property type="match status" value="1"/>
</dbReference>
<dbReference type="InterPro" id="IPR003728">
    <property type="entry name" value="Ribosome_maturation_RimP"/>
</dbReference>
<dbReference type="InterPro" id="IPR028998">
    <property type="entry name" value="RimP_C"/>
</dbReference>
<dbReference type="InterPro" id="IPR036847">
    <property type="entry name" value="RimP_C_sf"/>
</dbReference>
<dbReference type="InterPro" id="IPR028989">
    <property type="entry name" value="RimP_N"/>
</dbReference>
<dbReference type="InterPro" id="IPR035956">
    <property type="entry name" value="RimP_N_sf"/>
</dbReference>
<dbReference type="NCBIfam" id="NF000927">
    <property type="entry name" value="PRK00092.1-1"/>
    <property type="match status" value="1"/>
</dbReference>
<dbReference type="PANTHER" id="PTHR33867">
    <property type="entry name" value="RIBOSOME MATURATION FACTOR RIMP"/>
    <property type="match status" value="1"/>
</dbReference>
<dbReference type="PANTHER" id="PTHR33867:SF1">
    <property type="entry name" value="RIBOSOME MATURATION FACTOR RIMP"/>
    <property type="match status" value="1"/>
</dbReference>
<dbReference type="Pfam" id="PF17384">
    <property type="entry name" value="DUF150_C"/>
    <property type="match status" value="1"/>
</dbReference>
<dbReference type="Pfam" id="PF02576">
    <property type="entry name" value="RimP_N"/>
    <property type="match status" value="1"/>
</dbReference>
<dbReference type="SUPFAM" id="SSF74942">
    <property type="entry name" value="YhbC-like, C-terminal domain"/>
    <property type="match status" value="1"/>
</dbReference>
<dbReference type="SUPFAM" id="SSF75420">
    <property type="entry name" value="YhbC-like, N-terminal domain"/>
    <property type="match status" value="1"/>
</dbReference>
<accession>Q3IJ55</accession>